<evidence type="ECO:0000250" key="1">
    <source>
        <dbReference type="UniProtKB" id="Q8NDC0"/>
    </source>
</evidence>
<evidence type="ECO:0000256" key="2">
    <source>
        <dbReference type="SAM" id="MobiDB-lite"/>
    </source>
</evidence>
<evidence type="ECO:0000305" key="3"/>
<reference key="1">
    <citation type="journal article" date="2005" name="Science">
        <title>The transcriptional landscape of the mammalian genome.</title>
        <authorList>
            <person name="Carninci P."/>
            <person name="Kasukawa T."/>
            <person name="Katayama S."/>
            <person name="Gough J."/>
            <person name="Frith M.C."/>
            <person name="Maeda N."/>
            <person name="Oyama R."/>
            <person name="Ravasi T."/>
            <person name="Lenhard B."/>
            <person name="Wells C."/>
            <person name="Kodzius R."/>
            <person name="Shimokawa K."/>
            <person name="Bajic V.B."/>
            <person name="Brenner S.E."/>
            <person name="Batalov S."/>
            <person name="Forrest A.R."/>
            <person name="Zavolan M."/>
            <person name="Davis M.J."/>
            <person name="Wilming L.G."/>
            <person name="Aidinis V."/>
            <person name="Allen J.E."/>
            <person name="Ambesi-Impiombato A."/>
            <person name="Apweiler R."/>
            <person name="Aturaliya R.N."/>
            <person name="Bailey T.L."/>
            <person name="Bansal M."/>
            <person name="Baxter L."/>
            <person name="Beisel K.W."/>
            <person name="Bersano T."/>
            <person name="Bono H."/>
            <person name="Chalk A.M."/>
            <person name="Chiu K.P."/>
            <person name="Choudhary V."/>
            <person name="Christoffels A."/>
            <person name="Clutterbuck D.R."/>
            <person name="Crowe M.L."/>
            <person name="Dalla E."/>
            <person name="Dalrymple B.P."/>
            <person name="de Bono B."/>
            <person name="Della Gatta G."/>
            <person name="di Bernardo D."/>
            <person name="Down T."/>
            <person name="Engstrom P."/>
            <person name="Fagiolini M."/>
            <person name="Faulkner G."/>
            <person name="Fletcher C.F."/>
            <person name="Fukushima T."/>
            <person name="Furuno M."/>
            <person name="Futaki S."/>
            <person name="Gariboldi M."/>
            <person name="Georgii-Hemming P."/>
            <person name="Gingeras T.R."/>
            <person name="Gojobori T."/>
            <person name="Green R.E."/>
            <person name="Gustincich S."/>
            <person name="Harbers M."/>
            <person name="Hayashi Y."/>
            <person name="Hensch T.K."/>
            <person name="Hirokawa N."/>
            <person name="Hill D."/>
            <person name="Huminiecki L."/>
            <person name="Iacono M."/>
            <person name="Ikeo K."/>
            <person name="Iwama A."/>
            <person name="Ishikawa T."/>
            <person name="Jakt M."/>
            <person name="Kanapin A."/>
            <person name="Katoh M."/>
            <person name="Kawasawa Y."/>
            <person name="Kelso J."/>
            <person name="Kitamura H."/>
            <person name="Kitano H."/>
            <person name="Kollias G."/>
            <person name="Krishnan S.P."/>
            <person name="Kruger A."/>
            <person name="Kummerfeld S.K."/>
            <person name="Kurochkin I.V."/>
            <person name="Lareau L.F."/>
            <person name="Lazarevic D."/>
            <person name="Lipovich L."/>
            <person name="Liu J."/>
            <person name="Liuni S."/>
            <person name="McWilliam S."/>
            <person name="Madan Babu M."/>
            <person name="Madera M."/>
            <person name="Marchionni L."/>
            <person name="Matsuda H."/>
            <person name="Matsuzawa S."/>
            <person name="Miki H."/>
            <person name="Mignone F."/>
            <person name="Miyake S."/>
            <person name="Morris K."/>
            <person name="Mottagui-Tabar S."/>
            <person name="Mulder N."/>
            <person name="Nakano N."/>
            <person name="Nakauchi H."/>
            <person name="Ng P."/>
            <person name="Nilsson R."/>
            <person name="Nishiguchi S."/>
            <person name="Nishikawa S."/>
            <person name="Nori F."/>
            <person name="Ohara O."/>
            <person name="Okazaki Y."/>
            <person name="Orlando V."/>
            <person name="Pang K.C."/>
            <person name="Pavan W.J."/>
            <person name="Pavesi G."/>
            <person name="Pesole G."/>
            <person name="Petrovsky N."/>
            <person name="Piazza S."/>
            <person name="Reed J."/>
            <person name="Reid J.F."/>
            <person name="Ring B.Z."/>
            <person name="Ringwald M."/>
            <person name="Rost B."/>
            <person name="Ruan Y."/>
            <person name="Salzberg S.L."/>
            <person name="Sandelin A."/>
            <person name="Schneider C."/>
            <person name="Schoenbach C."/>
            <person name="Sekiguchi K."/>
            <person name="Semple C.A."/>
            <person name="Seno S."/>
            <person name="Sessa L."/>
            <person name="Sheng Y."/>
            <person name="Shibata Y."/>
            <person name="Shimada H."/>
            <person name="Shimada K."/>
            <person name="Silva D."/>
            <person name="Sinclair B."/>
            <person name="Sperling S."/>
            <person name="Stupka E."/>
            <person name="Sugiura K."/>
            <person name="Sultana R."/>
            <person name="Takenaka Y."/>
            <person name="Taki K."/>
            <person name="Tammoja K."/>
            <person name="Tan S.L."/>
            <person name="Tang S."/>
            <person name="Taylor M.S."/>
            <person name="Tegner J."/>
            <person name="Teichmann S.A."/>
            <person name="Ueda H.R."/>
            <person name="van Nimwegen E."/>
            <person name="Verardo R."/>
            <person name="Wei C.L."/>
            <person name="Yagi K."/>
            <person name="Yamanishi H."/>
            <person name="Zabarovsky E."/>
            <person name="Zhu S."/>
            <person name="Zimmer A."/>
            <person name="Hide W."/>
            <person name="Bult C."/>
            <person name="Grimmond S.M."/>
            <person name="Teasdale R.D."/>
            <person name="Liu E.T."/>
            <person name="Brusic V."/>
            <person name="Quackenbush J."/>
            <person name="Wahlestedt C."/>
            <person name="Mattick J.S."/>
            <person name="Hume D.A."/>
            <person name="Kai C."/>
            <person name="Sasaki D."/>
            <person name="Tomaru Y."/>
            <person name="Fukuda S."/>
            <person name="Kanamori-Katayama M."/>
            <person name="Suzuki M."/>
            <person name="Aoki J."/>
            <person name="Arakawa T."/>
            <person name="Iida J."/>
            <person name="Imamura K."/>
            <person name="Itoh M."/>
            <person name="Kato T."/>
            <person name="Kawaji H."/>
            <person name="Kawagashira N."/>
            <person name="Kawashima T."/>
            <person name="Kojima M."/>
            <person name="Kondo S."/>
            <person name="Konno H."/>
            <person name="Nakano K."/>
            <person name="Ninomiya N."/>
            <person name="Nishio T."/>
            <person name="Okada M."/>
            <person name="Plessy C."/>
            <person name="Shibata K."/>
            <person name="Shiraki T."/>
            <person name="Suzuki S."/>
            <person name="Tagami M."/>
            <person name="Waki K."/>
            <person name="Watahiki A."/>
            <person name="Okamura-Oho Y."/>
            <person name="Suzuki H."/>
            <person name="Kawai J."/>
            <person name="Hayashizaki Y."/>
        </authorList>
    </citation>
    <scope>NUCLEOTIDE SEQUENCE [LARGE SCALE MRNA]</scope>
    <source>
        <strain>C57BL/6J</strain>
        <tissue>Amnion</tissue>
        <tissue>Cecum</tissue>
        <tissue>Embryo</tissue>
        <tissue>Embryonic head</tissue>
        <tissue>Lung</tissue>
    </source>
</reference>
<reference key="2">
    <citation type="journal article" date="2004" name="Genome Res.">
        <title>The status, quality, and expansion of the NIH full-length cDNA project: the Mammalian Gene Collection (MGC).</title>
        <authorList>
            <consortium name="The MGC Project Team"/>
        </authorList>
    </citation>
    <scope>NUCLEOTIDE SEQUENCE [LARGE SCALE MRNA]</scope>
    <source>
        <strain>FVB/N</strain>
        <tissue>Colon</tissue>
    </source>
</reference>
<gene>
    <name type="primary">Mapk1ip1l</name>
</gene>
<feature type="initiator methionine" description="Removed" evidence="1">
    <location>
        <position position="1"/>
    </location>
</feature>
<feature type="chain" id="PRO_0000209892" description="MAPK-interacting and spindle-stabilizing protein-like">
    <location>
        <begin position="2"/>
        <end position="242"/>
    </location>
</feature>
<feature type="region of interest" description="Disordered" evidence="2">
    <location>
        <begin position="1"/>
        <end position="145"/>
    </location>
</feature>
<feature type="region of interest" description="Disordered" evidence="2">
    <location>
        <begin position="192"/>
        <end position="242"/>
    </location>
</feature>
<feature type="compositionally biased region" description="Polar residues" evidence="2">
    <location>
        <begin position="13"/>
        <end position="29"/>
    </location>
</feature>
<feature type="compositionally biased region" description="Low complexity" evidence="2">
    <location>
        <begin position="30"/>
        <end position="43"/>
    </location>
</feature>
<feature type="compositionally biased region" description="Pro residues" evidence="2">
    <location>
        <begin position="44"/>
        <end position="53"/>
    </location>
</feature>
<feature type="compositionally biased region" description="Pro residues" evidence="2">
    <location>
        <begin position="75"/>
        <end position="114"/>
    </location>
</feature>
<feature type="compositionally biased region" description="Low complexity" evidence="2">
    <location>
        <begin position="192"/>
        <end position="210"/>
    </location>
</feature>
<feature type="modified residue" description="N-acetylserine" evidence="1">
    <location>
        <position position="2"/>
    </location>
</feature>
<feature type="modified residue" description="Phosphoserine" evidence="1">
    <location>
        <position position="2"/>
    </location>
</feature>
<feature type="modified residue" description="Phosphoserine" evidence="1">
    <location>
        <position position="6"/>
    </location>
</feature>
<feature type="modified residue" description="Phosphoserine" evidence="1">
    <location>
        <position position="15"/>
    </location>
</feature>
<feature type="sequence conflict" description="In Ref. 1; BAE40538." evidence="3" ref="1">
    <original>A</original>
    <variation>T</variation>
    <location>
        <position position="200"/>
    </location>
</feature>
<accession>Q8BH93</accession>
<accession>Q3TF12</accession>
<accession>Q3TGL0</accession>
<accession>Q8CC90</accession>
<name>MISSL_MOUSE</name>
<dbReference type="EMBL" id="AK033615">
    <property type="protein sequence ID" value="BAC28392.1"/>
    <property type="molecule type" value="mRNA"/>
</dbReference>
<dbReference type="EMBL" id="AK048061">
    <property type="protein sequence ID" value="BAC33228.1"/>
    <property type="molecule type" value="mRNA"/>
</dbReference>
<dbReference type="EMBL" id="AK086896">
    <property type="protein sequence ID" value="BAC39759.1"/>
    <property type="molecule type" value="mRNA"/>
</dbReference>
<dbReference type="EMBL" id="AK143495">
    <property type="protein sequence ID" value="BAE25398.1"/>
    <property type="molecule type" value="mRNA"/>
</dbReference>
<dbReference type="EMBL" id="AK168694">
    <property type="protein sequence ID" value="BAE40538.1"/>
    <property type="molecule type" value="mRNA"/>
</dbReference>
<dbReference type="EMBL" id="AK169333">
    <property type="protein sequence ID" value="BAE41086.1"/>
    <property type="molecule type" value="mRNA"/>
</dbReference>
<dbReference type="EMBL" id="BC047201">
    <property type="protein sequence ID" value="AAH47201.1"/>
    <property type="molecule type" value="mRNA"/>
</dbReference>
<dbReference type="CCDS" id="CCDS49469.1"/>
<dbReference type="RefSeq" id="NP_848799.1">
    <property type="nucleotide sequence ID" value="NM_178684.6"/>
</dbReference>
<dbReference type="BioGRID" id="230089">
    <property type="interactions" value="2"/>
</dbReference>
<dbReference type="FunCoup" id="Q8BH93">
    <property type="interactions" value="107"/>
</dbReference>
<dbReference type="STRING" id="10090.ENSMUSP00000127475"/>
<dbReference type="GlyGen" id="Q8BH93">
    <property type="glycosylation" value="5 sites, 1 O-linked glycan (2 sites)"/>
</dbReference>
<dbReference type="iPTMnet" id="Q8BH93"/>
<dbReference type="PhosphoSitePlus" id="Q8BH93"/>
<dbReference type="PaxDb" id="10090-ENSMUSP00000132875"/>
<dbReference type="PeptideAtlas" id="Q8BH93"/>
<dbReference type="ProteomicsDB" id="295618"/>
<dbReference type="Pumba" id="Q8BH93"/>
<dbReference type="Ensembl" id="ENSMUST00000164235.3">
    <property type="protein sequence ID" value="ENSMUSP00000132875.2"/>
    <property type="gene ID" value="ENSMUSG00000021840.18"/>
</dbReference>
<dbReference type="Ensembl" id="ENSMUST00000166743.9">
    <property type="protein sequence ID" value="ENSMUSP00000127475.2"/>
    <property type="gene ID" value="ENSMUSG00000021840.18"/>
</dbReference>
<dbReference type="GeneID" id="218975"/>
<dbReference type="KEGG" id="mmu:218975"/>
<dbReference type="UCSC" id="uc007thy.1">
    <property type="organism name" value="mouse"/>
</dbReference>
<dbReference type="AGR" id="MGI:2444022"/>
<dbReference type="CTD" id="93487"/>
<dbReference type="MGI" id="MGI:2444022">
    <property type="gene designation" value="Mapk1ip1l"/>
</dbReference>
<dbReference type="VEuPathDB" id="HostDB:ENSMUSG00000021840"/>
<dbReference type="eggNOG" id="ENOG502RYAB">
    <property type="taxonomic scope" value="Eukaryota"/>
</dbReference>
<dbReference type="GeneTree" id="ENSGT00730000111340"/>
<dbReference type="HOGENOM" id="CLU_063887_0_0_1"/>
<dbReference type="InParanoid" id="Q8BH93"/>
<dbReference type="OMA" id="TPSMPYP"/>
<dbReference type="PhylomeDB" id="Q8BH93"/>
<dbReference type="BioGRID-ORCS" id="218975">
    <property type="hits" value="9 hits in 77 CRISPR screens"/>
</dbReference>
<dbReference type="ChiTaRS" id="Mapk1ip1l">
    <property type="organism name" value="mouse"/>
</dbReference>
<dbReference type="PRO" id="PR:Q8BH93"/>
<dbReference type="Proteomes" id="UP000000589">
    <property type="component" value="Chromosome 14"/>
</dbReference>
<dbReference type="RNAct" id="Q8BH93">
    <property type="molecule type" value="protein"/>
</dbReference>
<dbReference type="Bgee" id="ENSMUSG00000021840">
    <property type="expression patterns" value="Expressed in manus and 227 other cell types or tissues"/>
</dbReference>
<dbReference type="ExpressionAtlas" id="Q8BH93">
    <property type="expression patterns" value="baseline and differential"/>
</dbReference>
<dbReference type="InterPro" id="IPR031653">
    <property type="entry name" value="MISS"/>
</dbReference>
<dbReference type="PANTHER" id="PTHR35973">
    <property type="entry name" value="MAPK-INTERACTING AND SPINDLE-STABILIZING PROTEIN-LIKE"/>
    <property type="match status" value="1"/>
</dbReference>
<dbReference type="PANTHER" id="PTHR35973:SF1">
    <property type="entry name" value="MAPK-INTERACTING AND SPINDLE-STABILIZING PROTEIN-LIKE"/>
    <property type="match status" value="1"/>
</dbReference>
<dbReference type="Pfam" id="PF15822">
    <property type="entry name" value="MISS"/>
    <property type="match status" value="1"/>
</dbReference>
<proteinExistence type="evidence at transcript level"/>
<keyword id="KW-0007">Acetylation</keyword>
<keyword id="KW-0597">Phosphoprotein</keyword>
<keyword id="KW-1185">Reference proteome</keyword>
<sequence>MSDEFSLADALPEQSSAKPPAVTNTKAGHSSQGWPGSSPWSNPSAPPAMPSGLPPSSAAPSTVPFGPVPTGMYPSMPPTGPPPGPPGPFPPPGPSCPPPGVPYPAPAVPGPGPTGPYATPNMPMPELPRPYGAPTDPAAAGSLGPWGPMSSGPWAPGIAGQHPNMPYRSPGPYPTVPPPVSGAPPVPWGTVPPGAWGPAAPYPGPAGSYPTPAPHPALNNPYQVPSGPAGAPPMPGGPHSYH</sequence>
<organism>
    <name type="scientific">Mus musculus</name>
    <name type="common">Mouse</name>
    <dbReference type="NCBI Taxonomy" id="10090"/>
    <lineage>
        <taxon>Eukaryota</taxon>
        <taxon>Metazoa</taxon>
        <taxon>Chordata</taxon>
        <taxon>Craniata</taxon>
        <taxon>Vertebrata</taxon>
        <taxon>Euteleostomi</taxon>
        <taxon>Mammalia</taxon>
        <taxon>Eutheria</taxon>
        <taxon>Euarchontoglires</taxon>
        <taxon>Glires</taxon>
        <taxon>Rodentia</taxon>
        <taxon>Myomorpha</taxon>
        <taxon>Muroidea</taxon>
        <taxon>Muridae</taxon>
        <taxon>Murinae</taxon>
        <taxon>Mus</taxon>
        <taxon>Mus</taxon>
    </lineage>
</organism>
<protein>
    <recommendedName>
        <fullName>MAPK-interacting and spindle-stabilizing protein-like</fullName>
    </recommendedName>
    <alternativeName>
        <fullName>Mitogen-activated protein kinase 1-interacting protein 1-like</fullName>
    </alternativeName>
</protein>
<comment type="similarity">
    <text evidence="3">Belongs to the MISS family.</text>
</comment>